<feature type="transit peptide" description="Chloroplast" evidence="4">
    <location>
        <begin position="1"/>
        <end position="51"/>
    </location>
</feature>
<feature type="chain" id="PRO_0000030693" description="Cytochrome b6-f complex iron-sulfur subunit, chloroplastic">
    <location>
        <begin position="52"/>
        <end position="230"/>
    </location>
</feature>
<feature type="transmembrane region" description="Helical" evidence="5">
    <location>
        <begin position="73"/>
        <end position="93"/>
    </location>
</feature>
<feature type="domain" description="Rieske">
    <location>
        <begin position="116"/>
        <end position="212"/>
    </location>
</feature>
<feature type="binding site" evidence="3">
    <location>
        <position position="158"/>
    </location>
    <ligand>
        <name>[2Fe-2S] cluster</name>
        <dbReference type="ChEBI" id="CHEBI:190135"/>
    </ligand>
</feature>
<feature type="binding site" evidence="3">
    <location>
        <position position="160"/>
    </location>
    <ligand>
        <name>[2Fe-2S] cluster</name>
        <dbReference type="ChEBI" id="CHEBI:190135"/>
    </ligand>
</feature>
<feature type="binding site" evidence="3">
    <location>
        <position position="176"/>
    </location>
    <ligand>
        <name>[2Fe-2S] cluster</name>
        <dbReference type="ChEBI" id="CHEBI:190135"/>
    </ligand>
</feature>
<feature type="binding site" evidence="3">
    <location>
        <position position="179"/>
    </location>
    <ligand>
        <name>[2Fe-2S] cluster</name>
        <dbReference type="ChEBI" id="CHEBI:190135"/>
    </ligand>
</feature>
<feature type="disulfide bond" evidence="3">
    <location>
        <begin position="163"/>
        <end position="178"/>
    </location>
</feature>
<feature type="helix" evidence="8">
    <location>
        <begin position="63"/>
        <end position="90"/>
    </location>
</feature>
<feature type="strand" evidence="9">
    <location>
        <begin position="111"/>
        <end position="113"/>
    </location>
</feature>
<feature type="helix" evidence="7">
    <location>
        <begin position="116"/>
        <end position="122"/>
    </location>
</feature>
<feature type="strand" evidence="7">
    <location>
        <begin position="128"/>
        <end position="132"/>
    </location>
</feature>
<feature type="helix" evidence="7">
    <location>
        <begin position="134"/>
        <end position="136"/>
    </location>
</feature>
<feature type="strand" evidence="7">
    <location>
        <begin position="138"/>
        <end position="143"/>
    </location>
</feature>
<feature type="strand" evidence="7">
    <location>
        <begin position="147"/>
        <end position="149"/>
    </location>
</feature>
<feature type="strand" evidence="7">
    <location>
        <begin position="151"/>
        <end position="155"/>
    </location>
</feature>
<feature type="turn" evidence="7">
    <location>
        <begin position="159"/>
        <end position="161"/>
    </location>
</feature>
<feature type="turn" evidence="7">
    <location>
        <begin position="169"/>
        <end position="172"/>
    </location>
</feature>
<feature type="strand" evidence="7">
    <location>
        <begin position="173"/>
        <end position="175"/>
    </location>
</feature>
<feature type="turn" evidence="7">
    <location>
        <begin position="177"/>
        <end position="179"/>
    </location>
</feature>
<feature type="strand" evidence="7">
    <location>
        <begin position="182"/>
        <end position="184"/>
    </location>
</feature>
<feature type="strand" evidence="9">
    <location>
        <begin position="185"/>
        <end position="187"/>
    </location>
</feature>
<feature type="strand" evidence="7">
    <location>
        <begin position="189"/>
        <end position="193"/>
    </location>
</feature>
<feature type="strand" evidence="7">
    <location>
        <begin position="200"/>
        <end position="206"/>
    </location>
</feature>
<feature type="strand" evidence="7">
    <location>
        <begin position="209"/>
        <end position="214"/>
    </location>
</feature>
<feature type="turn" evidence="7">
    <location>
        <begin position="220"/>
        <end position="222"/>
    </location>
</feature>
<evidence type="ECO:0000250" key="1"/>
<evidence type="ECO:0000255" key="2">
    <source>
        <dbReference type="HAMAP-Rule" id="MF_01335"/>
    </source>
</evidence>
<evidence type="ECO:0000269" key="3">
    <source>
    </source>
</evidence>
<evidence type="ECO:0000269" key="4">
    <source ref="2"/>
</evidence>
<evidence type="ECO:0000305" key="5"/>
<evidence type="ECO:0000305" key="6">
    <source>
    </source>
</evidence>
<evidence type="ECO:0007829" key="7">
    <source>
        <dbReference type="PDB" id="1RFS"/>
    </source>
</evidence>
<evidence type="ECO:0007829" key="8">
    <source>
        <dbReference type="PDB" id="9ES7"/>
    </source>
</evidence>
<evidence type="ECO:0007829" key="9">
    <source>
        <dbReference type="PDB" id="9ES9"/>
    </source>
</evidence>
<proteinExistence type="evidence at protein level"/>
<name>UCRIA_SPIOL</name>
<organism>
    <name type="scientific">Spinacia oleracea</name>
    <name type="common">Spinach</name>
    <dbReference type="NCBI Taxonomy" id="3562"/>
    <lineage>
        <taxon>Eukaryota</taxon>
        <taxon>Viridiplantae</taxon>
        <taxon>Streptophyta</taxon>
        <taxon>Embryophyta</taxon>
        <taxon>Tracheophyta</taxon>
        <taxon>Spermatophyta</taxon>
        <taxon>Magnoliopsida</taxon>
        <taxon>eudicotyledons</taxon>
        <taxon>Gunneridae</taxon>
        <taxon>Pentapetalae</taxon>
        <taxon>Caryophyllales</taxon>
        <taxon>Chenopodiaceae</taxon>
        <taxon>Chenopodioideae</taxon>
        <taxon>Anserineae</taxon>
        <taxon>Spinacia</taxon>
    </lineage>
</organism>
<protein>
    <recommendedName>
        <fullName>Cytochrome b6-f complex iron-sulfur subunit, chloroplastic</fullName>
        <ecNumber>7.1.1.6</ecNumber>
    </recommendedName>
    <alternativeName>
        <fullName>Plastohydroquinone:plastocyanin oxidoreductase iron-sulfur protein</fullName>
    </alternativeName>
    <alternativeName>
        <fullName>Rieske iron-sulfur protein</fullName>
        <shortName>ISP</shortName>
        <shortName>RISP</shortName>
    </alternativeName>
</protein>
<reference key="1">
    <citation type="journal article" date="1987" name="Mol. Gen. Genet.">
        <title>The complete amino-acid sequence of the Rieske FeS-precursor protein from spinach chloroplasts deduced from cDNA analysis.</title>
        <authorList>
            <person name="Steppuhn J."/>
            <person name="Rother C."/>
            <person name="Hermans J."/>
            <person name="Jansen T."/>
            <person name="Salnikow J."/>
            <person name="Hauska G."/>
            <person name="Herrmann R.G."/>
        </authorList>
    </citation>
    <scope>NUCLEOTIDE SEQUENCE [MRNA]</scope>
    <source>
        <strain>cv. Monatol</strain>
    </source>
</reference>
<reference key="2">
    <citation type="journal article" date="1986" name="FEBS Lett.">
        <title>N-terminal amino acid sequence of the Rieske iron-sulfur protein from the cytochrome b6/f-complex of spinach thylakoids.</title>
        <authorList>
            <person name="Pfefferkorn B."/>
            <person name="Meyer H.E."/>
        </authorList>
    </citation>
    <scope>PROTEIN SEQUENCE OF 52-147</scope>
</reference>
<reference key="3">
    <citation type="journal article" date="1997" name="Structure">
        <title>Biological identity and diversity in photosynthesis and respiration: structure of the lumen-side domain of the chloroplast Rieske protein.</title>
        <authorList>
            <person name="Carrell C.J."/>
            <person name="Zhang H."/>
            <person name="Cramer W.A."/>
            <person name="Smith J.L."/>
        </authorList>
    </citation>
    <scope>X-RAY CRYSTALLOGRAPHY (1.83 ANGSTROMS) OF 92-230 IN COMPLEX WITH 2FE-2S CLUSTER</scope>
    <scope>COFACTOR</scope>
</reference>
<gene>
    <name type="primary">petC</name>
</gene>
<dbReference type="EC" id="7.1.1.6"/>
<dbReference type="EMBL" id="X06244">
    <property type="protein sequence ID" value="CAA29590.1"/>
    <property type="status" value="ALT_INIT"/>
    <property type="molecule type" value="mRNA"/>
</dbReference>
<dbReference type="PIR" id="S00454">
    <property type="entry name" value="S00454"/>
</dbReference>
<dbReference type="PDB" id="1RFS">
    <property type="method" value="X-ray"/>
    <property type="resolution" value="1.83 A"/>
    <property type="chains" value="A=92-230"/>
</dbReference>
<dbReference type="PDB" id="6RQF">
    <property type="method" value="EM"/>
    <property type="resolution" value="3.58 A"/>
    <property type="chains" value="D/L=52-230"/>
</dbReference>
<dbReference type="PDB" id="7QRM">
    <property type="method" value="EM"/>
    <property type="resolution" value="2.70 A"/>
    <property type="chains" value="D/L=1-230"/>
</dbReference>
<dbReference type="PDB" id="7ZYV">
    <property type="method" value="EM"/>
    <property type="resolution" value="2.13 A"/>
    <property type="chains" value="D/L=1-230"/>
</dbReference>
<dbReference type="PDB" id="9ES7">
    <property type="method" value="EM"/>
    <property type="resolution" value="1.94 A"/>
    <property type="chains" value="D/L=1-230"/>
</dbReference>
<dbReference type="PDB" id="9ES8">
    <property type="method" value="EM"/>
    <property type="resolution" value="2.24 A"/>
    <property type="chains" value="D/L=1-230"/>
</dbReference>
<dbReference type="PDB" id="9ES9">
    <property type="method" value="EM"/>
    <property type="resolution" value="2.33 A"/>
    <property type="chains" value="D/L=1-230"/>
</dbReference>
<dbReference type="PDBsum" id="1RFS"/>
<dbReference type="PDBsum" id="6RQF"/>
<dbReference type="PDBsum" id="7QRM"/>
<dbReference type="PDBsum" id="7ZYV"/>
<dbReference type="PDBsum" id="9ES7"/>
<dbReference type="PDBsum" id="9ES8"/>
<dbReference type="PDBsum" id="9ES9"/>
<dbReference type="EMDB" id="EMD-14123"/>
<dbReference type="EMDB" id="EMD-15027"/>
<dbReference type="EMDB" id="EMD-19938"/>
<dbReference type="EMDB" id="EMD-19939"/>
<dbReference type="EMDB" id="EMD-19940"/>
<dbReference type="EMDB" id="EMD-4981"/>
<dbReference type="SMR" id="P08980"/>
<dbReference type="IntAct" id="P08980">
    <property type="interactions" value="1"/>
</dbReference>
<dbReference type="EvolutionaryTrace" id="P08980"/>
<dbReference type="Proteomes" id="UP001155700">
    <property type="component" value="Unplaced"/>
</dbReference>
<dbReference type="GO" id="GO:0009535">
    <property type="term" value="C:chloroplast thylakoid membrane"/>
    <property type="evidence" value="ECO:0007669"/>
    <property type="project" value="UniProtKB-SubCell"/>
</dbReference>
<dbReference type="GO" id="GO:0005886">
    <property type="term" value="C:plasma membrane"/>
    <property type="evidence" value="ECO:0000318"/>
    <property type="project" value="GO_Central"/>
</dbReference>
<dbReference type="GO" id="GO:0051537">
    <property type="term" value="F:2 iron, 2 sulfur cluster binding"/>
    <property type="evidence" value="ECO:0007669"/>
    <property type="project" value="UniProtKB-KW"/>
</dbReference>
<dbReference type="GO" id="GO:0045158">
    <property type="term" value="F:electron transporter, transferring electrons within cytochrome b6/f complex of photosystem II activity"/>
    <property type="evidence" value="ECO:0007669"/>
    <property type="project" value="InterPro"/>
</dbReference>
<dbReference type="GO" id="GO:0046872">
    <property type="term" value="F:metal ion binding"/>
    <property type="evidence" value="ECO:0007669"/>
    <property type="project" value="UniProtKB-KW"/>
</dbReference>
<dbReference type="GO" id="GO:0016491">
    <property type="term" value="F:oxidoreductase activity"/>
    <property type="evidence" value="ECO:0000318"/>
    <property type="project" value="GO_Central"/>
</dbReference>
<dbReference type="GO" id="GO:0009496">
    <property type="term" value="F:plastoquinol--plastocyanin reductase activity"/>
    <property type="evidence" value="ECO:0007669"/>
    <property type="project" value="UniProtKB-EC"/>
</dbReference>
<dbReference type="CDD" id="cd03471">
    <property type="entry name" value="Rieske_cytochrome_b6f"/>
    <property type="match status" value="1"/>
</dbReference>
<dbReference type="FunFam" id="1.20.5.700:FF:000002">
    <property type="entry name" value="Cytochrome b6-f complex iron-sulfur subunit"/>
    <property type="match status" value="1"/>
</dbReference>
<dbReference type="FunFam" id="2.102.10.10:FF:000007">
    <property type="entry name" value="Cytochrome b6-f complex iron-sulfur subunit"/>
    <property type="match status" value="1"/>
</dbReference>
<dbReference type="Gene3D" id="2.102.10.10">
    <property type="entry name" value="Rieske [2Fe-2S] iron-sulphur domain"/>
    <property type="match status" value="1"/>
</dbReference>
<dbReference type="Gene3D" id="1.20.5.700">
    <property type="entry name" value="Single helix bin"/>
    <property type="match status" value="1"/>
</dbReference>
<dbReference type="HAMAP" id="MF_01335">
    <property type="entry name" value="Cytb6_f_Rieske"/>
    <property type="match status" value="1"/>
</dbReference>
<dbReference type="InterPro" id="IPR023960">
    <property type="entry name" value="Cyt_b6_f_Rieske"/>
</dbReference>
<dbReference type="InterPro" id="IPR017941">
    <property type="entry name" value="Rieske_2Fe-2S"/>
</dbReference>
<dbReference type="InterPro" id="IPR036922">
    <property type="entry name" value="Rieske_2Fe-2S_sf"/>
</dbReference>
<dbReference type="InterPro" id="IPR014349">
    <property type="entry name" value="Rieske_Fe-S_prot"/>
</dbReference>
<dbReference type="InterPro" id="IPR005805">
    <property type="entry name" value="Rieske_Fe-S_prot_C"/>
</dbReference>
<dbReference type="NCBIfam" id="NF045928">
    <property type="entry name" value="Cytb6fFeSPetC"/>
    <property type="match status" value="1"/>
</dbReference>
<dbReference type="NCBIfam" id="NF010001">
    <property type="entry name" value="PRK13474.1"/>
    <property type="match status" value="1"/>
</dbReference>
<dbReference type="PANTHER" id="PTHR10134">
    <property type="entry name" value="CYTOCHROME B-C1 COMPLEX SUBUNIT RIESKE, MITOCHONDRIAL"/>
    <property type="match status" value="1"/>
</dbReference>
<dbReference type="Pfam" id="PF00355">
    <property type="entry name" value="Rieske"/>
    <property type="match status" value="1"/>
</dbReference>
<dbReference type="Pfam" id="PF25471">
    <property type="entry name" value="TM_PetC"/>
    <property type="match status" value="1"/>
</dbReference>
<dbReference type="PRINTS" id="PR00162">
    <property type="entry name" value="RIESKE"/>
</dbReference>
<dbReference type="SUPFAM" id="SSF50022">
    <property type="entry name" value="ISP domain"/>
    <property type="match status" value="1"/>
</dbReference>
<dbReference type="PROSITE" id="PS51296">
    <property type="entry name" value="RIESKE"/>
    <property type="match status" value="1"/>
</dbReference>
<comment type="function">
    <text evidence="1">Component of the cytochrome b6-f complex, which mediates electron transfer between photosystem II (PSII) and photosystem I (PSI), cyclic electron flow around PSI, and state transitions.</text>
</comment>
<comment type="catalytic activity">
    <reaction>
        <text>2 oxidized [plastocyanin] + a plastoquinol + 2 H(+)(in) = 2 reduced [plastocyanin] + a plastoquinone + 4 H(+)(out)</text>
        <dbReference type="Rhea" id="RHEA:22148"/>
        <dbReference type="Rhea" id="RHEA-COMP:9561"/>
        <dbReference type="Rhea" id="RHEA-COMP:9562"/>
        <dbReference type="Rhea" id="RHEA-COMP:10039"/>
        <dbReference type="Rhea" id="RHEA-COMP:10040"/>
        <dbReference type="ChEBI" id="CHEBI:15378"/>
        <dbReference type="ChEBI" id="CHEBI:17757"/>
        <dbReference type="ChEBI" id="CHEBI:29036"/>
        <dbReference type="ChEBI" id="CHEBI:49552"/>
        <dbReference type="ChEBI" id="CHEBI:62192"/>
        <dbReference type="EC" id="7.1.1.6"/>
    </reaction>
</comment>
<comment type="cofactor">
    <cofactor evidence="3">
        <name>[2Fe-2S] cluster</name>
        <dbReference type="ChEBI" id="CHEBI:190135"/>
    </cofactor>
    <text evidence="3">Binds 1 [2Fe-2S] cluster per subunit.</text>
</comment>
<comment type="subunit">
    <text evidence="1">The 4 large subunits of the cytochrome b6-f complex are cytochrome b6, subunit IV (17 kDa polypeptide, petD), cytochrome f and the Rieske protein, while the 4 small subunits are petG, petL, petM and petN. The complex functions as a dimer (By similarity).</text>
</comment>
<comment type="subcellular location">
    <subcellularLocation>
        <location evidence="6">Plastid</location>
        <location evidence="6">Chloroplast thylakoid membrane</location>
        <topology evidence="6">Single-pass membrane protein</topology>
    </subcellularLocation>
    <text evidence="1">The transmembrane helix obliquely spans the membrane in one monomer, and its extrinsic C-terminal domain is part of the other monomer.</text>
</comment>
<comment type="miscellaneous">
    <text>This protein is 1 of 2 subunits of the cytochrome b6-f complex that are encoded in the nucleus.</text>
</comment>
<comment type="miscellaneous">
    <text>The Rieske iron-sulfur protein is a high potential 2Fe-2S protein.</text>
</comment>
<comment type="similarity">
    <text evidence="2">Belongs to the Rieske iron-sulfur protein family.</text>
</comment>
<comment type="sequence caution" evidence="5">
    <conflict type="erroneous initiation">
        <sequence resource="EMBL-CDS" id="CAA29590"/>
    </conflict>
    <text>Extended N-terminus.</text>
</comment>
<keyword id="KW-0001">2Fe-2S</keyword>
<keyword id="KW-0002">3D-structure</keyword>
<keyword id="KW-0150">Chloroplast</keyword>
<keyword id="KW-0903">Direct protein sequencing</keyword>
<keyword id="KW-1015">Disulfide bond</keyword>
<keyword id="KW-0249">Electron transport</keyword>
<keyword id="KW-0408">Iron</keyword>
<keyword id="KW-0411">Iron-sulfur</keyword>
<keyword id="KW-0472">Membrane</keyword>
<keyword id="KW-0479">Metal-binding</keyword>
<keyword id="KW-0934">Plastid</keyword>
<keyword id="KW-1185">Reference proteome</keyword>
<keyword id="KW-0793">Thylakoid</keyword>
<keyword id="KW-0809">Transit peptide</keyword>
<keyword id="KW-1278">Translocase</keyword>
<keyword id="KW-0812">Transmembrane</keyword>
<keyword id="KW-1133">Transmembrane helix</keyword>
<keyword id="KW-0813">Transport</keyword>
<accession>P08980</accession>
<sequence length="230" mass="24325">MASFTLSSATPSQLCSSKNGMFAPSLALAKAGRVNVLISKERIRGMKLTCQATSIPADNVPDMQKRETLNLLLLGALSLPTGYMLLPYASFFVPPGGGAGTGGTIAKDALGNDVIAAEWLKTHAPGDRTLTQGLKGDPTYLVVESDKTLATFGINAVCTHLGCVVPFNAAENKFICPCHGSQYNNQGRVVRGPAPLSLALAHCDVDDGKVVFVPWTETDFRTGEAPWWSA</sequence>